<feature type="chain" id="PRO_0000280019" description="Glutathione import ATP-binding protein GsiA">
    <location>
        <begin position="1"/>
        <end position="623"/>
    </location>
</feature>
<feature type="domain" description="ABC transporter 1" evidence="2">
    <location>
        <begin position="15"/>
        <end position="269"/>
    </location>
</feature>
<feature type="domain" description="ABC transporter 2" evidence="2">
    <location>
        <begin position="314"/>
        <end position="564"/>
    </location>
</feature>
<feature type="binding site" evidence="2">
    <location>
        <begin position="49"/>
        <end position="56"/>
    </location>
    <ligand>
        <name>ATP</name>
        <dbReference type="ChEBI" id="CHEBI:30616"/>
    </ligand>
</feature>
<feature type="binding site" evidence="2">
    <location>
        <begin position="357"/>
        <end position="364"/>
    </location>
    <ligand>
        <name>ATP</name>
        <dbReference type="ChEBI" id="CHEBI:30616"/>
    </ligand>
</feature>
<sequence>MPHSDELDAGNVLAVENLNIAFMQDQQKIAAVRNLSFSLQRGETLAIVGESGSGKSVTALALMRLLEQAGGLVQCDKMLLRRRSRDVIELSEQSAAQMRHVRGADMAMIFQEPMTSLNPVFTVGEQIAESIRLHQNASREEAMVEAKRMLDQVRIPEAQTILSRYPHQLSGGMRQRVMIAMALSCRPAVLIADEPTTALDVTIQAQILQLIKVLQKEMSMGVIFITHDMGVVAEIADRVLVMYQGEAVETGTVEQIFHAPQHPYTRALLAAVPQLGAMKGLDYPRRFPLISLEHPAKQAPPIEQKTVVDGEPVLRVRNLVTRFPLRSGLLNRVTREVHAVEKVSFDLWPGETLSLVGESGSGKSTTGRALLRLVESQGGEIIFNGQRIDTLSPGKLQALRRDIQFIFQDPYASLDPRQTIGDSIIEPLRVHGLLPGKEAVARVAWLLERVGLLPEHAWRYPHEFSGGQRQRICIARALALNPKVIIADEAVSALDVSIRGQIINLLLDLQRDFGIAYLFISHDMAVVERISHRVAVMYLGQIVEIGPRRAVFENPQHPYTRKLLAAVPVAEPSRQRPQRVLLSDDLPSNIHLRGEEVAAVSLQCVGPGHYVAQPQSEYAFMRR</sequence>
<protein>
    <recommendedName>
        <fullName evidence="1">Glutathione import ATP-binding protein GsiA</fullName>
        <ecNumber evidence="1">7.4.2.10</ecNumber>
    </recommendedName>
</protein>
<comment type="function">
    <text evidence="1">Part of the ABC transporter complex GsiABCD involved in glutathione import. Responsible for energy coupling to the transport system.</text>
</comment>
<comment type="catalytic activity">
    <reaction evidence="1">
        <text>glutathione(out) + ATP + H2O = glutathione(in) + ADP + phosphate + H(+)</text>
        <dbReference type="Rhea" id="RHEA:29791"/>
        <dbReference type="ChEBI" id="CHEBI:15377"/>
        <dbReference type="ChEBI" id="CHEBI:15378"/>
        <dbReference type="ChEBI" id="CHEBI:30616"/>
        <dbReference type="ChEBI" id="CHEBI:43474"/>
        <dbReference type="ChEBI" id="CHEBI:57925"/>
        <dbReference type="ChEBI" id="CHEBI:456216"/>
        <dbReference type="EC" id="7.4.2.10"/>
    </reaction>
</comment>
<comment type="subunit">
    <text evidence="1">The complex is composed of two ATP-binding proteins (GsiA), two transmembrane proteins (GsiC and GsiD) and a solute-binding protein (GsiB).</text>
</comment>
<comment type="subcellular location">
    <subcellularLocation>
        <location evidence="1">Cell inner membrane</location>
        <topology evidence="1">Peripheral membrane protein</topology>
    </subcellularLocation>
</comment>
<comment type="similarity">
    <text evidence="3">Belongs to the ABC transporter superfamily. Glutathione importer (TC 3.A.1.5.11) family.</text>
</comment>
<comment type="sequence caution" evidence="3">
    <conflict type="erroneous initiation">
        <sequence resource="EMBL-CDS" id="AAG55203"/>
    </conflict>
    <text>Truncated N-terminus.</text>
</comment>
<gene>
    <name evidence="1" type="primary">gsiA</name>
    <name type="ordered locus">Z1053</name>
    <name type="ordered locus">ECs0908</name>
</gene>
<reference key="1">
    <citation type="journal article" date="2001" name="Nature">
        <title>Genome sequence of enterohaemorrhagic Escherichia coli O157:H7.</title>
        <authorList>
            <person name="Perna N.T."/>
            <person name="Plunkett G. III"/>
            <person name="Burland V."/>
            <person name="Mau B."/>
            <person name="Glasner J.D."/>
            <person name="Rose D.J."/>
            <person name="Mayhew G.F."/>
            <person name="Evans P.S."/>
            <person name="Gregor J."/>
            <person name="Kirkpatrick H.A."/>
            <person name="Posfai G."/>
            <person name="Hackett J."/>
            <person name="Klink S."/>
            <person name="Boutin A."/>
            <person name="Shao Y."/>
            <person name="Miller L."/>
            <person name="Grotbeck E.J."/>
            <person name="Davis N.W."/>
            <person name="Lim A."/>
            <person name="Dimalanta E.T."/>
            <person name="Potamousis K."/>
            <person name="Apodaca J."/>
            <person name="Anantharaman T.S."/>
            <person name="Lin J."/>
            <person name="Yen G."/>
            <person name="Schwartz D.C."/>
            <person name="Welch R.A."/>
            <person name="Blattner F.R."/>
        </authorList>
    </citation>
    <scope>NUCLEOTIDE SEQUENCE [LARGE SCALE GENOMIC DNA]</scope>
    <source>
        <strain>O157:H7 / EDL933 / ATCC 700927 / EHEC</strain>
    </source>
</reference>
<reference key="2">
    <citation type="journal article" date="2001" name="DNA Res.">
        <title>Complete genome sequence of enterohemorrhagic Escherichia coli O157:H7 and genomic comparison with a laboratory strain K-12.</title>
        <authorList>
            <person name="Hayashi T."/>
            <person name="Makino K."/>
            <person name="Ohnishi M."/>
            <person name="Kurokawa K."/>
            <person name="Ishii K."/>
            <person name="Yokoyama K."/>
            <person name="Han C.-G."/>
            <person name="Ohtsubo E."/>
            <person name="Nakayama K."/>
            <person name="Murata T."/>
            <person name="Tanaka M."/>
            <person name="Tobe T."/>
            <person name="Iida T."/>
            <person name="Takami H."/>
            <person name="Honda T."/>
            <person name="Sasakawa C."/>
            <person name="Ogasawara N."/>
            <person name="Yasunaga T."/>
            <person name="Kuhara S."/>
            <person name="Shiba T."/>
            <person name="Hattori M."/>
            <person name="Shinagawa H."/>
        </authorList>
    </citation>
    <scope>NUCLEOTIDE SEQUENCE [LARGE SCALE GENOMIC DNA]</scope>
    <source>
        <strain>O157:H7 / Sakai / RIMD 0509952 / EHEC</strain>
    </source>
</reference>
<accession>Q8X6W1</accession>
<accession>Q7AGA6</accession>
<organism>
    <name type="scientific">Escherichia coli O157:H7</name>
    <dbReference type="NCBI Taxonomy" id="83334"/>
    <lineage>
        <taxon>Bacteria</taxon>
        <taxon>Pseudomonadati</taxon>
        <taxon>Pseudomonadota</taxon>
        <taxon>Gammaproteobacteria</taxon>
        <taxon>Enterobacterales</taxon>
        <taxon>Enterobacteriaceae</taxon>
        <taxon>Escherichia</taxon>
    </lineage>
</organism>
<dbReference type="EC" id="7.4.2.10" evidence="1"/>
<dbReference type="EMBL" id="AE005174">
    <property type="protein sequence ID" value="AAG55203.1"/>
    <property type="status" value="ALT_INIT"/>
    <property type="molecule type" value="Genomic_DNA"/>
</dbReference>
<dbReference type="EMBL" id="BA000007">
    <property type="protein sequence ID" value="BAB34331.2"/>
    <property type="molecule type" value="Genomic_DNA"/>
</dbReference>
<dbReference type="PIR" id="D90742">
    <property type="entry name" value="D90742"/>
</dbReference>
<dbReference type="PIR" id="G85592">
    <property type="entry name" value="G85592"/>
</dbReference>
<dbReference type="RefSeq" id="NP_308935.2">
    <property type="nucleotide sequence ID" value="NC_002695.1"/>
</dbReference>
<dbReference type="RefSeq" id="WP_001301498.1">
    <property type="nucleotide sequence ID" value="NZ_VOAI01000006.1"/>
</dbReference>
<dbReference type="SMR" id="Q8X6W1"/>
<dbReference type="STRING" id="155864.Z1053"/>
<dbReference type="GeneID" id="917648"/>
<dbReference type="KEGG" id="ece:Z1053"/>
<dbReference type="KEGG" id="ecs:ECs_0908"/>
<dbReference type="PATRIC" id="fig|386585.9.peg.1023"/>
<dbReference type="eggNOG" id="COG4172">
    <property type="taxonomic scope" value="Bacteria"/>
</dbReference>
<dbReference type="HOGENOM" id="CLU_000604_86_2_6"/>
<dbReference type="OMA" id="KSFPHEF"/>
<dbReference type="Proteomes" id="UP000000558">
    <property type="component" value="Chromosome"/>
</dbReference>
<dbReference type="Proteomes" id="UP000002519">
    <property type="component" value="Chromosome"/>
</dbReference>
<dbReference type="GO" id="GO:0005886">
    <property type="term" value="C:plasma membrane"/>
    <property type="evidence" value="ECO:0007669"/>
    <property type="project" value="UniProtKB-SubCell"/>
</dbReference>
<dbReference type="GO" id="GO:0005524">
    <property type="term" value="F:ATP binding"/>
    <property type="evidence" value="ECO:0007669"/>
    <property type="project" value="UniProtKB-KW"/>
</dbReference>
<dbReference type="GO" id="GO:0016887">
    <property type="term" value="F:ATP hydrolysis activity"/>
    <property type="evidence" value="ECO:0007669"/>
    <property type="project" value="InterPro"/>
</dbReference>
<dbReference type="GO" id="GO:0015833">
    <property type="term" value="P:peptide transport"/>
    <property type="evidence" value="ECO:0007669"/>
    <property type="project" value="InterPro"/>
</dbReference>
<dbReference type="GO" id="GO:0055085">
    <property type="term" value="P:transmembrane transport"/>
    <property type="evidence" value="ECO:0007669"/>
    <property type="project" value="UniProtKB-ARBA"/>
</dbReference>
<dbReference type="CDD" id="cd03257">
    <property type="entry name" value="ABC_NikE_OppD_transporters"/>
    <property type="match status" value="2"/>
</dbReference>
<dbReference type="FunFam" id="3.40.50.300:FF:001061">
    <property type="entry name" value="Glutathione import ATP-binding protein GsiA"/>
    <property type="match status" value="1"/>
</dbReference>
<dbReference type="FunFam" id="3.40.50.300:FF:000016">
    <property type="entry name" value="Oligopeptide ABC transporter ATP-binding component"/>
    <property type="match status" value="1"/>
</dbReference>
<dbReference type="Gene3D" id="3.40.50.300">
    <property type="entry name" value="P-loop containing nucleotide triphosphate hydrolases"/>
    <property type="match status" value="2"/>
</dbReference>
<dbReference type="InterPro" id="IPR003593">
    <property type="entry name" value="AAA+_ATPase"/>
</dbReference>
<dbReference type="InterPro" id="IPR050319">
    <property type="entry name" value="ABC_transp_ATP-bind"/>
</dbReference>
<dbReference type="InterPro" id="IPR003439">
    <property type="entry name" value="ABC_transporter-like_ATP-bd"/>
</dbReference>
<dbReference type="InterPro" id="IPR017871">
    <property type="entry name" value="ABC_transporter-like_CS"/>
</dbReference>
<dbReference type="InterPro" id="IPR013563">
    <property type="entry name" value="Oligopep_ABC_C"/>
</dbReference>
<dbReference type="InterPro" id="IPR027417">
    <property type="entry name" value="P-loop_NTPase"/>
</dbReference>
<dbReference type="NCBIfam" id="NF007613">
    <property type="entry name" value="PRK10261.1"/>
    <property type="match status" value="1"/>
</dbReference>
<dbReference type="NCBIfam" id="NF007739">
    <property type="entry name" value="PRK10419.1"/>
    <property type="match status" value="2"/>
</dbReference>
<dbReference type="NCBIfam" id="NF008453">
    <property type="entry name" value="PRK11308.1"/>
    <property type="match status" value="2"/>
</dbReference>
<dbReference type="PANTHER" id="PTHR43776:SF15">
    <property type="entry name" value="GLUTATHIONE IMPORT ATP-BINDING PROTEIN GSIA"/>
    <property type="match status" value="1"/>
</dbReference>
<dbReference type="PANTHER" id="PTHR43776">
    <property type="entry name" value="TRANSPORT ATP-BINDING PROTEIN"/>
    <property type="match status" value="1"/>
</dbReference>
<dbReference type="Pfam" id="PF00005">
    <property type="entry name" value="ABC_tran"/>
    <property type="match status" value="2"/>
</dbReference>
<dbReference type="Pfam" id="PF08352">
    <property type="entry name" value="oligo_HPY"/>
    <property type="match status" value="2"/>
</dbReference>
<dbReference type="SMART" id="SM00382">
    <property type="entry name" value="AAA"/>
    <property type="match status" value="2"/>
</dbReference>
<dbReference type="SUPFAM" id="SSF52540">
    <property type="entry name" value="P-loop containing nucleoside triphosphate hydrolases"/>
    <property type="match status" value="2"/>
</dbReference>
<dbReference type="PROSITE" id="PS00211">
    <property type="entry name" value="ABC_TRANSPORTER_1"/>
    <property type="match status" value="2"/>
</dbReference>
<dbReference type="PROSITE" id="PS50893">
    <property type="entry name" value="ABC_TRANSPORTER_2"/>
    <property type="match status" value="2"/>
</dbReference>
<name>GSIA_ECO57</name>
<proteinExistence type="inferred from homology"/>
<keyword id="KW-0067">ATP-binding</keyword>
<keyword id="KW-0997">Cell inner membrane</keyword>
<keyword id="KW-1003">Cell membrane</keyword>
<keyword id="KW-0378">Hydrolase</keyword>
<keyword id="KW-0472">Membrane</keyword>
<keyword id="KW-0547">Nucleotide-binding</keyword>
<keyword id="KW-1185">Reference proteome</keyword>
<keyword id="KW-0677">Repeat</keyword>
<keyword id="KW-1278">Translocase</keyword>
<keyword id="KW-0813">Transport</keyword>
<evidence type="ECO:0000250" key="1">
    <source>
        <dbReference type="UniProtKB" id="P75796"/>
    </source>
</evidence>
<evidence type="ECO:0000255" key="2">
    <source>
        <dbReference type="PROSITE-ProRule" id="PRU00434"/>
    </source>
</evidence>
<evidence type="ECO:0000305" key="3"/>